<feature type="chain" id="PRO_0000338989" description="Mitotic-spindle organizing protein 2">
    <location>
        <begin position="1"/>
        <end position="153"/>
    </location>
</feature>
<feature type="region of interest" description="Disordered" evidence="2">
    <location>
        <begin position="80"/>
        <end position="153"/>
    </location>
</feature>
<feature type="compositionally biased region" description="Polar residues" evidence="2">
    <location>
        <begin position="81"/>
        <end position="99"/>
    </location>
</feature>
<feature type="compositionally biased region" description="Polar residues" evidence="2">
    <location>
        <begin position="107"/>
        <end position="133"/>
    </location>
</feature>
<feature type="compositionally biased region" description="Low complexity" evidence="2">
    <location>
        <begin position="134"/>
        <end position="153"/>
    </location>
</feature>
<sequence length="153" mass="16171">MPSAPDSPSLSVNVSGNVQKYSIKKKKVLNAEETELFELTQAAGVVIDQEVFKIIVDLLKMNVAPLAVFQTLKTMCAGQKVSETSTGDASSTSHTTAVPTESRVRSKMSSGQGEKSARESSSQRVPRQVSATRGQKSTKSSGSSSSSSQLTSN</sequence>
<evidence type="ECO:0000250" key="1"/>
<evidence type="ECO:0000256" key="2">
    <source>
        <dbReference type="SAM" id="MobiDB-lite"/>
    </source>
</evidence>
<evidence type="ECO:0000305" key="3"/>
<comment type="subunit">
    <text evidence="1">Part of the gamma-tubulin complex. Interacts with TUBG1 (By similarity).</text>
</comment>
<comment type="subcellular location">
    <subcellularLocation>
        <location evidence="1">Cytoplasm</location>
        <location evidence="1">Cytoskeleton</location>
        <location evidence="1">Microtubule organizing center</location>
        <location evidence="1">Centrosome</location>
    </subcellularLocation>
    <subcellularLocation>
        <location evidence="1">Cytoplasm</location>
        <location evidence="1">Cytoskeleton</location>
        <location evidence="1">Spindle</location>
    </subcellularLocation>
</comment>
<comment type="similarity">
    <text evidence="3">Belongs to the MOZART2 family.</text>
</comment>
<keyword id="KW-0963">Cytoplasm</keyword>
<keyword id="KW-0206">Cytoskeleton</keyword>
<keyword id="KW-1185">Reference proteome</keyword>
<accession>Q6DC17</accession>
<organism>
    <name type="scientific">Danio rerio</name>
    <name type="common">Zebrafish</name>
    <name type="synonym">Brachydanio rerio</name>
    <dbReference type="NCBI Taxonomy" id="7955"/>
    <lineage>
        <taxon>Eukaryota</taxon>
        <taxon>Metazoa</taxon>
        <taxon>Chordata</taxon>
        <taxon>Craniata</taxon>
        <taxon>Vertebrata</taxon>
        <taxon>Euteleostomi</taxon>
        <taxon>Actinopterygii</taxon>
        <taxon>Neopterygii</taxon>
        <taxon>Teleostei</taxon>
        <taxon>Ostariophysi</taxon>
        <taxon>Cypriniformes</taxon>
        <taxon>Danionidae</taxon>
        <taxon>Danioninae</taxon>
        <taxon>Danio</taxon>
    </lineage>
</organism>
<dbReference type="EMBL" id="BC078275">
    <property type="protein sequence ID" value="AAH78275.1"/>
    <property type="molecule type" value="mRNA"/>
</dbReference>
<dbReference type="RefSeq" id="NP_001003568.1">
    <property type="nucleotide sequence ID" value="NM_001003568.2"/>
</dbReference>
<dbReference type="SMR" id="Q6DC17"/>
<dbReference type="FunCoup" id="Q6DC17">
    <property type="interactions" value="1134"/>
</dbReference>
<dbReference type="AGR" id="ZFIN:ZDB-GENE-040801-87"/>
<dbReference type="ZFIN" id="ZDB-GENE-040801-87">
    <property type="gene designation" value="mzt2b"/>
</dbReference>
<dbReference type="InParanoid" id="Q6DC17"/>
<dbReference type="OrthoDB" id="10064769at2759"/>
<dbReference type="PhylomeDB" id="Q6DC17"/>
<dbReference type="PRO" id="PR:Q6DC17"/>
<dbReference type="Proteomes" id="UP000000437">
    <property type="component" value="Chromosome 21"/>
</dbReference>
<dbReference type="GO" id="GO:0005813">
    <property type="term" value="C:centrosome"/>
    <property type="evidence" value="ECO:0000250"/>
    <property type="project" value="UniProtKB"/>
</dbReference>
<dbReference type="GO" id="GO:0005737">
    <property type="term" value="C:cytoplasm"/>
    <property type="evidence" value="ECO:0007669"/>
    <property type="project" value="UniProtKB-KW"/>
</dbReference>
<dbReference type="GO" id="GO:0000931">
    <property type="term" value="C:gamma-tubulin ring complex"/>
    <property type="evidence" value="ECO:0000250"/>
    <property type="project" value="UniProtKB"/>
</dbReference>
<dbReference type="GO" id="GO:0005819">
    <property type="term" value="C:spindle"/>
    <property type="evidence" value="ECO:0000250"/>
    <property type="project" value="UniProtKB"/>
</dbReference>
<dbReference type="InterPro" id="IPR024332">
    <property type="entry name" value="MOZART2"/>
</dbReference>
<dbReference type="PANTHER" id="PTHR28578:SF2">
    <property type="entry name" value="MITOTIC-SPINDLE ORGANIZING PROTEIN 2"/>
    <property type="match status" value="1"/>
</dbReference>
<dbReference type="PANTHER" id="PTHR28578">
    <property type="entry name" value="MITOTIC-SPINDLE ORGANIZING PROTEIN 2A-RELATED"/>
    <property type="match status" value="1"/>
</dbReference>
<dbReference type="Pfam" id="PF12926">
    <property type="entry name" value="MOZART2"/>
    <property type="match status" value="1"/>
</dbReference>
<gene>
    <name type="primary">mzt2</name>
    <name type="synonym">fam128</name>
    <name type="synonym">mozart2</name>
    <name type="ORF">zgc:101080</name>
</gene>
<reference key="1">
    <citation type="submission" date="2004-07" db="EMBL/GenBank/DDBJ databases">
        <authorList>
            <consortium name="NIH - Zebrafish Gene Collection (ZGC) project"/>
        </authorList>
    </citation>
    <scope>NUCLEOTIDE SEQUENCE [LARGE SCALE MRNA]</scope>
    <source>
        <tissue>Embryo</tissue>
    </source>
</reference>
<proteinExistence type="evidence at transcript level"/>
<protein>
    <recommendedName>
        <fullName>Mitotic-spindle organizing protein 2</fullName>
    </recommendedName>
    <alternativeName>
        <fullName>Mitotic-spindle organizing protein associated with a ring of gamma-tubulin 2</fullName>
    </alternativeName>
</protein>
<name>MZT2_DANRE</name>